<name>RS14_RHIE6</name>
<feature type="chain" id="PRO_1000128533" description="Small ribosomal subunit protein uS14">
    <location>
        <begin position="1"/>
        <end position="101"/>
    </location>
</feature>
<sequence>MAKTSAVEKNKRRRTTVANQAAKRAALKAIIMNQALPIEERFKASIKLASLPRDGSKTRIRNRCEVSGRPRAYYRKLRMSRIALRELGNLGKVPGIVKSSW</sequence>
<organism>
    <name type="scientific">Rhizobium etli (strain CIAT 652)</name>
    <dbReference type="NCBI Taxonomy" id="491916"/>
    <lineage>
        <taxon>Bacteria</taxon>
        <taxon>Pseudomonadati</taxon>
        <taxon>Pseudomonadota</taxon>
        <taxon>Alphaproteobacteria</taxon>
        <taxon>Hyphomicrobiales</taxon>
        <taxon>Rhizobiaceae</taxon>
        <taxon>Rhizobium/Agrobacterium group</taxon>
        <taxon>Rhizobium</taxon>
    </lineage>
</organism>
<accession>B3PWT4</accession>
<dbReference type="EMBL" id="CP001074">
    <property type="protein sequence ID" value="ACE90732.1"/>
    <property type="molecule type" value="Genomic_DNA"/>
</dbReference>
<dbReference type="SMR" id="B3PWT4"/>
<dbReference type="KEGG" id="rec:RHECIAT_CH0001762"/>
<dbReference type="eggNOG" id="COG0199">
    <property type="taxonomic scope" value="Bacteria"/>
</dbReference>
<dbReference type="HOGENOM" id="CLU_139869_0_1_5"/>
<dbReference type="Proteomes" id="UP000008817">
    <property type="component" value="Chromosome"/>
</dbReference>
<dbReference type="GO" id="GO:0005737">
    <property type="term" value="C:cytoplasm"/>
    <property type="evidence" value="ECO:0007669"/>
    <property type="project" value="UniProtKB-ARBA"/>
</dbReference>
<dbReference type="GO" id="GO:0015935">
    <property type="term" value="C:small ribosomal subunit"/>
    <property type="evidence" value="ECO:0007669"/>
    <property type="project" value="TreeGrafter"/>
</dbReference>
<dbReference type="GO" id="GO:0019843">
    <property type="term" value="F:rRNA binding"/>
    <property type="evidence" value="ECO:0007669"/>
    <property type="project" value="UniProtKB-UniRule"/>
</dbReference>
<dbReference type="GO" id="GO:0003735">
    <property type="term" value="F:structural constituent of ribosome"/>
    <property type="evidence" value="ECO:0007669"/>
    <property type="project" value="InterPro"/>
</dbReference>
<dbReference type="GO" id="GO:0006412">
    <property type="term" value="P:translation"/>
    <property type="evidence" value="ECO:0007669"/>
    <property type="project" value="UniProtKB-UniRule"/>
</dbReference>
<dbReference type="FunFam" id="1.10.287.1480:FF:000001">
    <property type="entry name" value="30S ribosomal protein S14"/>
    <property type="match status" value="1"/>
</dbReference>
<dbReference type="Gene3D" id="1.10.287.1480">
    <property type="match status" value="1"/>
</dbReference>
<dbReference type="HAMAP" id="MF_00537">
    <property type="entry name" value="Ribosomal_uS14_1"/>
    <property type="match status" value="1"/>
</dbReference>
<dbReference type="InterPro" id="IPR001209">
    <property type="entry name" value="Ribosomal_uS14"/>
</dbReference>
<dbReference type="InterPro" id="IPR023036">
    <property type="entry name" value="Ribosomal_uS14_bac/plastid"/>
</dbReference>
<dbReference type="InterPro" id="IPR018271">
    <property type="entry name" value="Ribosomal_uS14_CS"/>
</dbReference>
<dbReference type="NCBIfam" id="NF006477">
    <property type="entry name" value="PRK08881.1"/>
    <property type="match status" value="1"/>
</dbReference>
<dbReference type="PANTHER" id="PTHR19836">
    <property type="entry name" value="30S RIBOSOMAL PROTEIN S14"/>
    <property type="match status" value="1"/>
</dbReference>
<dbReference type="PANTHER" id="PTHR19836:SF19">
    <property type="entry name" value="SMALL RIBOSOMAL SUBUNIT PROTEIN US14M"/>
    <property type="match status" value="1"/>
</dbReference>
<dbReference type="Pfam" id="PF00253">
    <property type="entry name" value="Ribosomal_S14"/>
    <property type="match status" value="1"/>
</dbReference>
<dbReference type="SUPFAM" id="SSF57716">
    <property type="entry name" value="Glucocorticoid receptor-like (DNA-binding domain)"/>
    <property type="match status" value="1"/>
</dbReference>
<dbReference type="PROSITE" id="PS00527">
    <property type="entry name" value="RIBOSOMAL_S14"/>
    <property type="match status" value="1"/>
</dbReference>
<comment type="function">
    <text evidence="1">Binds 16S rRNA, required for the assembly of 30S particles and may also be responsible for determining the conformation of the 16S rRNA at the A site.</text>
</comment>
<comment type="subunit">
    <text evidence="1">Part of the 30S ribosomal subunit. Contacts proteins S3 and S10.</text>
</comment>
<comment type="similarity">
    <text evidence="1">Belongs to the universal ribosomal protein uS14 family.</text>
</comment>
<gene>
    <name evidence="1" type="primary">rpsN</name>
    <name type="ordered locus">RHECIAT_CH0001762</name>
</gene>
<proteinExistence type="inferred from homology"/>
<protein>
    <recommendedName>
        <fullName evidence="1">Small ribosomal subunit protein uS14</fullName>
    </recommendedName>
    <alternativeName>
        <fullName evidence="2">30S ribosomal protein S14</fullName>
    </alternativeName>
</protein>
<evidence type="ECO:0000255" key="1">
    <source>
        <dbReference type="HAMAP-Rule" id="MF_00537"/>
    </source>
</evidence>
<evidence type="ECO:0000305" key="2"/>
<keyword id="KW-0687">Ribonucleoprotein</keyword>
<keyword id="KW-0689">Ribosomal protein</keyword>
<keyword id="KW-0694">RNA-binding</keyword>
<keyword id="KW-0699">rRNA-binding</keyword>
<reference key="1">
    <citation type="journal article" date="2010" name="Appl. Environ. Microbiol.">
        <title>Conserved symbiotic plasmid DNA sequences in the multireplicon pangenomic structure of Rhizobium etli.</title>
        <authorList>
            <person name="Gonzalez V."/>
            <person name="Acosta J.L."/>
            <person name="Santamaria R.I."/>
            <person name="Bustos P."/>
            <person name="Fernandez J.L."/>
            <person name="Hernandez Gonzalez I.L."/>
            <person name="Diaz R."/>
            <person name="Flores M."/>
            <person name="Palacios R."/>
            <person name="Mora J."/>
            <person name="Davila G."/>
        </authorList>
    </citation>
    <scope>NUCLEOTIDE SEQUENCE [LARGE SCALE GENOMIC DNA]</scope>
    <source>
        <strain>CIAT 652</strain>
    </source>
</reference>